<name>RS20_BURCH</name>
<comment type="function">
    <text evidence="1">Binds directly to 16S ribosomal RNA.</text>
</comment>
<comment type="similarity">
    <text evidence="1">Belongs to the bacterial ribosomal protein bS20 family.</text>
</comment>
<evidence type="ECO:0000255" key="1">
    <source>
        <dbReference type="HAMAP-Rule" id="MF_00500"/>
    </source>
</evidence>
<evidence type="ECO:0000256" key="2">
    <source>
        <dbReference type="SAM" id="MobiDB-lite"/>
    </source>
</evidence>
<evidence type="ECO:0000305" key="3"/>
<accession>A0K9X4</accession>
<sequence>MANSAQARKRARQAAKANSHNSALRSKFRTAIKSVRKAVEAGDQAKAAELFKAAVKTIDTIADKKIVHKNKAARSKSRLAAAVKGLQAAA</sequence>
<feature type="chain" id="PRO_1000014555" description="Small ribosomal subunit protein bS20">
    <location>
        <begin position="1"/>
        <end position="90"/>
    </location>
</feature>
<feature type="region of interest" description="Disordered" evidence="2">
    <location>
        <begin position="1"/>
        <end position="25"/>
    </location>
</feature>
<gene>
    <name evidence="1" type="primary">rpsT</name>
    <name type="ordered locus">Bcen2424_2551</name>
</gene>
<protein>
    <recommendedName>
        <fullName evidence="1">Small ribosomal subunit protein bS20</fullName>
    </recommendedName>
    <alternativeName>
        <fullName evidence="3">30S ribosomal protein S20</fullName>
    </alternativeName>
</protein>
<reference key="1">
    <citation type="submission" date="2006-08" db="EMBL/GenBank/DDBJ databases">
        <title>Complete sequence of chromosome 1 of Burkholderia cenocepacia HI2424.</title>
        <authorList>
            <person name="Copeland A."/>
            <person name="Lucas S."/>
            <person name="Lapidus A."/>
            <person name="Barry K."/>
            <person name="Detter J.C."/>
            <person name="Glavina del Rio T."/>
            <person name="Hammon N."/>
            <person name="Israni S."/>
            <person name="Pitluck S."/>
            <person name="Chain P."/>
            <person name="Malfatti S."/>
            <person name="Shin M."/>
            <person name="Vergez L."/>
            <person name="Schmutz J."/>
            <person name="Larimer F."/>
            <person name="Land M."/>
            <person name="Hauser L."/>
            <person name="Kyrpides N."/>
            <person name="Kim E."/>
            <person name="LiPuma J.J."/>
            <person name="Gonzalez C.F."/>
            <person name="Konstantinidis K."/>
            <person name="Tiedje J.M."/>
            <person name="Richardson P."/>
        </authorList>
    </citation>
    <scope>NUCLEOTIDE SEQUENCE [LARGE SCALE GENOMIC DNA]</scope>
    <source>
        <strain>HI2424</strain>
    </source>
</reference>
<organism>
    <name type="scientific">Burkholderia cenocepacia (strain HI2424)</name>
    <dbReference type="NCBI Taxonomy" id="331272"/>
    <lineage>
        <taxon>Bacteria</taxon>
        <taxon>Pseudomonadati</taxon>
        <taxon>Pseudomonadota</taxon>
        <taxon>Betaproteobacteria</taxon>
        <taxon>Burkholderiales</taxon>
        <taxon>Burkholderiaceae</taxon>
        <taxon>Burkholderia</taxon>
        <taxon>Burkholderia cepacia complex</taxon>
    </lineage>
</organism>
<proteinExistence type="inferred from homology"/>
<keyword id="KW-0687">Ribonucleoprotein</keyword>
<keyword id="KW-0689">Ribosomal protein</keyword>
<keyword id="KW-0694">RNA-binding</keyword>
<keyword id="KW-0699">rRNA-binding</keyword>
<dbReference type="EMBL" id="CP000458">
    <property type="protein sequence ID" value="ABK09301.1"/>
    <property type="molecule type" value="Genomic_DNA"/>
</dbReference>
<dbReference type="RefSeq" id="WP_006482211.1">
    <property type="nucleotide sequence ID" value="NC_008542.1"/>
</dbReference>
<dbReference type="SMR" id="A0K9X4"/>
<dbReference type="GeneID" id="98106158"/>
<dbReference type="KEGG" id="bch:Bcen2424_2551"/>
<dbReference type="HOGENOM" id="CLU_160655_4_0_4"/>
<dbReference type="GO" id="GO:0005829">
    <property type="term" value="C:cytosol"/>
    <property type="evidence" value="ECO:0007669"/>
    <property type="project" value="TreeGrafter"/>
</dbReference>
<dbReference type="GO" id="GO:0015935">
    <property type="term" value="C:small ribosomal subunit"/>
    <property type="evidence" value="ECO:0007669"/>
    <property type="project" value="TreeGrafter"/>
</dbReference>
<dbReference type="GO" id="GO:0070181">
    <property type="term" value="F:small ribosomal subunit rRNA binding"/>
    <property type="evidence" value="ECO:0007669"/>
    <property type="project" value="TreeGrafter"/>
</dbReference>
<dbReference type="GO" id="GO:0003735">
    <property type="term" value="F:structural constituent of ribosome"/>
    <property type="evidence" value="ECO:0007669"/>
    <property type="project" value="InterPro"/>
</dbReference>
<dbReference type="GO" id="GO:0006412">
    <property type="term" value="P:translation"/>
    <property type="evidence" value="ECO:0007669"/>
    <property type="project" value="UniProtKB-UniRule"/>
</dbReference>
<dbReference type="FunFam" id="1.20.58.110:FF:000001">
    <property type="entry name" value="30S ribosomal protein S20"/>
    <property type="match status" value="1"/>
</dbReference>
<dbReference type="Gene3D" id="1.20.58.110">
    <property type="entry name" value="Ribosomal protein S20"/>
    <property type="match status" value="1"/>
</dbReference>
<dbReference type="HAMAP" id="MF_00500">
    <property type="entry name" value="Ribosomal_bS20"/>
    <property type="match status" value="1"/>
</dbReference>
<dbReference type="InterPro" id="IPR002583">
    <property type="entry name" value="Ribosomal_bS20"/>
</dbReference>
<dbReference type="InterPro" id="IPR036510">
    <property type="entry name" value="Ribosomal_bS20_sf"/>
</dbReference>
<dbReference type="NCBIfam" id="TIGR00029">
    <property type="entry name" value="S20"/>
    <property type="match status" value="1"/>
</dbReference>
<dbReference type="PANTHER" id="PTHR33398">
    <property type="entry name" value="30S RIBOSOMAL PROTEIN S20"/>
    <property type="match status" value="1"/>
</dbReference>
<dbReference type="PANTHER" id="PTHR33398:SF1">
    <property type="entry name" value="SMALL RIBOSOMAL SUBUNIT PROTEIN BS20C"/>
    <property type="match status" value="1"/>
</dbReference>
<dbReference type="Pfam" id="PF01649">
    <property type="entry name" value="Ribosomal_S20p"/>
    <property type="match status" value="1"/>
</dbReference>
<dbReference type="SUPFAM" id="SSF46992">
    <property type="entry name" value="Ribosomal protein S20"/>
    <property type="match status" value="1"/>
</dbReference>